<organism>
    <name type="scientific">Exiguobacterium sp. (strain ATCC BAA-1283 / AT1b)</name>
    <dbReference type="NCBI Taxonomy" id="360911"/>
    <lineage>
        <taxon>Bacteria</taxon>
        <taxon>Bacillati</taxon>
        <taxon>Bacillota</taxon>
        <taxon>Bacilli</taxon>
        <taxon>Bacillales</taxon>
        <taxon>Bacillales Family XII. Incertae Sedis</taxon>
        <taxon>Exiguobacterium</taxon>
    </lineage>
</organism>
<keyword id="KW-0963">Cytoplasm</keyword>
<keyword id="KW-0456">Lyase</keyword>
<keyword id="KW-0704">Schiff base</keyword>
<reference key="1">
    <citation type="journal article" date="2011" name="J. Bacteriol.">
        <title>Complete genome sequence of the Thermophilic Bacterium Exiguobacterium sp. AT1b.</title>
        <authorList>
            <person name="Vishnivetskaya T.A."/>
            <person name="Lucas S."/>
            <person name="Copeland A."/>
            <person name="Lapidus A."/>
            <person name="Glavina del Rio T."/>
            <person name="Dalin E."/>
            <person name="Tice H."/>
            <person name="Bruce D.C."/>
            <person name="Goodwin L.A."/>
            <person name="Pitluck S."/>
            <person name="Saunders E."/>
            <person name="Brettin T."/>
            <person name="Detter C."/>
            <person name="Han C."/>
            <person name="Larimer F."/>
            <person name="Land M.L."/>
            <person name="Hauser L.J."/>
            <person name="Kyrpides N.C."/>
            <person name="Ovchinnikova G."/>
            <person name="Kathariou S."/>
            <person name="Ramaley R.F."/>
            <person name="Rodrigues D.F."/>
            <person name="Hendrix C."/>
            <person name="Richardson P."/>
            <person name="Tiedje J.M."/>
        </authorList>
    </citation>
    <scope>NUCLEOTIDE SEQUENCE [LARGE SCALE GENOMIC DNA]</scope>
    <source>
        <strain>ATCC BAA-1283 / AT1b</strain>
    </source>
</reference>
<sequence>MELARYIDHTALKAETTKDQITTLCAEALEYKFASVCVNPTWVKYAAEQLKSDDDVKVCTVIGFPLGANTPEVKAFETKDAIANGADEVDMVINIAALKDADYDLVERDIRAVVEAANGTLVKVIFETCMLTKEEIKKAAELSVKAGADFVKTSTGFSTGGATVEDIRLMRETVGPDIGVKASGGVRDFEGAKAMIDAGATRIGASAGIAIVTGGRSDSDY</sequence>
<accession>C4L415</accession>
<dbReference type="EC" id="4.1.2.4" evidence="1"/>
<dbReference type="EMBL" id="CP001615">
    <property type="protein sequence ID" value="ACQ69537.1"/>
    <property type="molecule type" value="Genomic_DNA"/>
</dbReference>
<dbReference type="RefSeq" id="WP_012726656.1">
    <property type="nucleotide sequence ID" value="NC_012673.1"/>
</dbReference>
<dbReference type="SMR" id="C4L415"/>
<dbReference type="STRING" id="360911.EAT1b_0606"/>
<dbReference type="GeneID" id="94371779"/>
<dbReference type="KEGG" id="eat:EAT1b_0606"/>
<dbReference type="eggNOG" id="COG0274">
    <property type="taxonomic scope" value="Bacteria"/>
</dbReference>
<dbReference type="HOGENOM" id="CLU_053595_0_1_9"/>
<dbReference type="OrthoDB" id="9778711at2"/>
<dbReference type="UniPathway" id="UPA00002">
    <property type="reaction ID" value="UER00468"/>
</dbReference>
<dbReference type="Proteomes" id="UP000000716">
    <property type="component" value="Chromosome"/>
</dbReference>
<dbReference type="GO" id="GO:0005737">
    <property type="term" value="C:cytoplasm"/>
    <property type="evidence" value="ECO:0007669"/>
    <property type="project" value="UniProtKB-SubCell"/>
</dbReference>
<dbReference type="GO" id="GO:0004139">
    <property type="term" value="F:deoxyribose-phosphate aldolase activity"/>
    <property type="evidence" value="ECO:0007669"/>
    <property type="project" value="UniProtKB-UniRule"/>
</dbReference>
<dbReference type="GO" id="GO:0006018">
    <property type="term" value="P:2-deoxyribose 1-phosphate catabolic process"/>
    <property type="evidence" value="ECO:0007669"/>
    <property type="project" value="UniProtKB-UniRule"/>
</dbReference>
<dbReference type="GO" id="GO:0016052">
    <property type="term" value="P:carbohydrate catabolic process"/>
    <property type="evidence" value="ECO:0007669"/>
    <property type="project" value="TreeGrafter"/>
</dbReference>
<dbReference type="GO" id="GO:0009264">
    <property type="term" value="P:deoxyribonucleotide catabolic process"/>
    <property type="evidence" value="ECO:0007669"/>
    <property type="project" value="InterPro"/>
</dbReference>
<dbReference type="CDD" id="cd00959">
    <property type="entry name" value="DeoC"/>
    <property type="match status" value="1"/>
</dbReference>
<dbReference type="FunFam" id="3.20.20.70:FF:000044">
    <property type="entry name" value="Deoxyribose-phosphate aldolase"/>
    <property type="match status" value="1"/>
</dbReference>
<dbReference type="Gene3D" id="3.20.20.70">
    <property type="entry name" value="Aldolase class I"/>
    <property type="match status" value="1"/>
</dbReference>
<dbReference type="HAMAP" id="MF_00114">
    <property type="entry name" value="DeoC_type1"/>
    <property type="match status" value="1"/>
</dbReference>
<dbReference type="InterPro" id="IPR013785">
    <property type="entry name" value="Aldolase_TIM"/>
</dbReference>
<dbReference type="InterPro" id="IPR011343">
    <property type="entry name" value="DeoC"/>
</dbReference>
<dbReference type="InterPro" id="IPR002915">
    <property type="entry name" value="DeoC/FbaB/LacD_aldolase"/>
</dbReference>
<dbReference type="InterPro" id="IPR028581">
    <property type="entry name" value="DeoC_typeI"/>
</dbReference>
<dbReference type="NCBIfam" id="TIGR00126">
    <property type="entry name" value="deoC"/>
    <property type="match status" value="1"/>
</dbReference>
<dbReference type="PANTHER" id="PTHR10889">
    <property type="entry name" value="DEOXYRIBOSE-PHOSPHATE ALDOLASE"/>
    <property type="match status" value="1"/>
</dbReference>
<dbReference type="PANTHER" id="PTHR10889:SF1">
    <property type="entry name" value="DEOXYRIBOSE-PHOSPHATE ALDOLASE"/>
    <property type="match status" value="1"/>
</dbReference>
<dbReference type="Pfam" id="PF01791">
    <property type="entry name" value="DeoC"/>
    <property type="match status" value="1"/>
</dbReference>
<dbReference type="PIRSF" id="PIRSF001357">
    <property type="entry name" value="DeoC"/>
    <property type="match status" value="1"/>
</dbReference>
<dbReference type="SMART" id="SM01133">
    <property type="entry name" value="DeoC"/>
    <property type="match status" value="1"/>
</dbReference>
<dbReference type="SUPFAM" id="SSF51569">
    <property type="entry name" value="Aldolase"/>
    <property type="match status" value="1"/>
</dbReference>
<feature type="chain" id="PRO_1000202965" description="Deoxyribose-phosphate aldolase">
    <location>
        <begin position="1"/>
        <end position="221"/>
    </location>
</feature>
<feature type="active site" description="Proton donor/acceptor" evidence="1">
    <location>
        <position position="90"/>
    </location>
</feature>
<feature type="active site" description="Schiff-base intermediate with acetaldehyde" evidence="1">
    <location>
        <position position="152"/>
    </location>
</feature>
<feature type="active site" description="Proton donor/acceptor" evidence="1">
    <location>
        <position position="181"/>
    </location>
</feature>
<proteinExistence type="inferred from homology"/>
<comment type="function">
    <text evidence="1">Catalyzes a reversible aldol reaction between acetaldehyde and D-glyceraldehyde 3-phosphate to generate 2-deoxy-D-ribose 5-phosphate.</text>
</comment>
<comment type="catalytic activity">
    <reaction evidence="1">
        <text>2-deoxy-D-ribose 5-phosphate = D-glyceraldehyde 3-phosphate + acetaldehyde</text>
        <dbReference type="Rhea" id="RHEA:12821"/>
        <dbReference type="ChEBI" id="CHEBI:15343"/>
        <dbReference type="ChEBI" id="CHEBI:59776"/>
        <dbReference type="ChEBI" id="CHEBI:62877"/>
        <dbReference type="EC" id="4.1.2.4"/>
    </reaction>
</comment>
<comment type="pathway">
    <text evidence="1">Carbohydrate degradation; 2-deoxy-D-ribose 1-phosphate degradation; D-glyceraldehyde 3-phosphate and acetaldehyde from 2-deoxy-alpha-D-ribose 1-phosphate: step 2/2.</text>
</comment>
<comment type="subcellular location">
    <subcellularLocation>
        <location evidence="1">Cytoplasm</location>
    </subcellularLocation>
</comment>
<comment type="similarity">
    <text evidence="1">Belongs to the DeoC/FbaB aldolase family. DeoC type 1 subfamily.</text>
</comment>
<evidence type="ECO:0000255" key="1">
    <source>
        <dbReference type="HAMAP-Rule" id="MF_00114"/>
    </source>
</evidence>
<protein>
    <recommendedName>
        <fullName evidence="1">Deoxyribose-phosphate aldolase</fullName>
        <shortName evidence="1">DERA</shortName>
        <ecNumber evidence="1">4.1.2.4</ecNumber>
    </recommendedName>
    <alternativeName>
        <fullName evidence="1">2-deoxy-D-ribose 5-phosphate aldolase</fullName>
    </alternativeName>
    <alternativeName>
        <fullName evidence="1">Phosphodeoxyriboaldolase</fullName>
        <shortName evidence="1">Deoxyriboaldolase</shortName>
    </alternativeName>
</protein>
<name>DEOC_EXISA</name>
<gene>
    <name evidence="1" type="primary">deoC</name>
    <name type="ordered locus">EAT1b_0606</name>
</gene>